<organism>
    <name type="scientific">Bordetella bronchiseptica (strain ATCC BAA-588 / NCTC 13252 / RB50)</name>
    <name type="common">Alcaligenes bronchisepticus</name>
    <dbReference type="NCBI Taxonomy" id="257310"/>
    <lineage>
        <taxon>Bacteria</taxon>
        <taxon>Pseudomonadati</taxon>
        <taxon>Pseudomonadota</taxon>
        <taxon>Betaproteobacteria</taxon>
        <taxon>Burkholderiales</taxon>
        <taxon>Alcaligenaceae</taxon>
        <taxon>Bordetella</taxon>
    </lineage>
</organism>
<sequence length="430" mass="49582">MRITTPVNPDGVQFPVWDRPDRFFFAPERHERHDLSRPGFFIRAEGIMTDIGRMAHVVPARTQLPVSAYFDEARFAREQELIFKQSSLYVGHQKLVPELGDWRTLVQEDGGRALVRNQRGVELVSNVCRHRQALMLGGEAGNVSGNANTRGSLKDTGGNIVCPLHRWTYNDRGELLGAPQFDATPCMNLQRFRLRDCHGLLFEGPRDPAADMAPLFARPEFDFGDYVLDHVEVHQCNYNWKTFIEVYLEDYHVGPFHPGLGRFVTCDDLAWEFNDWYSLQRVGVHQALAQPGSAVYKQWHDRLLDFRAGQAPDFGAMWVTYFPTHMIELYPHVLVLSTLYPKSPQETLNVVEFYYPEEIVAFEREFVEAQRAAYMETAIEDDEIAERMDAGRKALMLRGANETGPYQSPMEDGMQHFHEWYRRVMGETED</sequence>
<gene>
    <name evidence="3" type="primary">put2H</name>
    <name evidence="6" type="ordered locus">BB1906</name>
</gene>
<comment type="function">
    <text evidence="2 5">Rieske-type iron sulfur protein that can catalyze in vitro the 2-hydroxylation of putrescine, forming 2-hydroxyputrescine (PubMed:27541336). May be involved in the biosynthesis of the cyclic hydroxamate siderophore alcaligin (Probable).</text>
</comment>
<comment type="cofactor">
    <cofactor evidence="1">
        <name>[2Fe-2S] cluster</name>
        <dbReference type="ChEBI" id="CHEBI:190135"/>
    </cofactor>
    <text evidence="1">Binds 1 [2Fe-2S] cluster per subunit.</text>
</comment>
<comment type="similarity">
    <text evidence="4">Belongs to the bacterial ring-hydroxylating dioxygenase alpha subunit family.</text>
</comment>
<feature type="chain" id="PRO_0000460756" description="Putrescine 2-hydroxylase">
    <location>
        <begin position="1"/>
        <end position="430"/>
    </location>
</feature>
<feature type="domain" description="Rieske" evidence="1">
    <location>
        <begin position="88"/>
        <end position="203"/>
    </location>
</feature>
<feature type="binding site" evidence="1">
    <location>
        <position position="128"/>
    </location>
    <ligand>
        <name>[2Fe-2S] cluster</name>
        <dbReference type="ChEBI" id="CHEBI:190135"/>
    </ligand>
</feature>
<feature type="binding site" evidence="1">
    <location>
        <position position="130"/>
    </location>
    <ligand>
        <name>[2Fe-2S] cluster</name>
        <dbReference type="ChEBI" id="CHEBI:190135"/>
    </ligand>
</feature>
<feature type="binding site" evidence="1">
    <location>
        <position position="162"/>
    </location>
    <ligand>
        <name>[2Fe-2S] cluster</name>
        <dbReference type="ChEBI" id="CHEBI:190135"/>
    </ligand>
</feature>
<feature type="binding site" evidence="1">
    <location>
        <position position="165"/>
    </location>
    <ligand>
        <name>[2Fe-2S] cluster</name>
        <dbReference type="ChEBI" id="CHEBI:190135"/>
    </ligand>
</feature>
<evidence type="ECO:0000255" key="1">
    <source>
        <dbReference type="PROSITE-ProRule" id="PRU00628"/>
    </source>
</evidence>
<evidence type="ECO:0000269" key="2">
    <source>
    </source>
</evidence>
<evidence type="ECO:0000303" key="3">
    <source>
    </source>
</evidence>
<evidence type="ECO:0000305" key="4"/>
<evidence type="ECO:0000305" key="5">
    <source>
    </source>
</evidence>
<evidence type="ECO:0000312" key="6">
    <source>
        <dbReference type="EMBL" id="CAE32403.1"/>
    </source>
</evidence>
<name>PUT2H_BORBR</name>
<proteinExistence type="evidence at protein level"/>
<protein>
    <recommendedName>
        <fullName evidence="3">Putrescine 2-hydroxylase</fullName>
        <ecNumber evidence="5">1.14.-.-</ecNumber>
    </recommendedName>
</protein>
<keyword id="KW-0001">2Fe-2S</keyword>
<keyword id="KW-0408">Iron</keyword>
<keyword id="KW-0411">Iron-sulfur</keyword>
<keyword id="KW-0479">Metal-binding</keyword>
<keyword id="KW-0503">Monooxygenase</keyword>
<keyword id="KW-0560">Oxidoreductase</keyword>
<reference key="1">
    <citation type="journal article" date="2003" name="Nat. Genet.">
        <title>Comparative analysis of the genome sequences of Bordetella pertussis, Bordetella parapertussis and Bordetella bronchiseptica.</title>
        <authorList>
            <person name="Parkhill J."/>
            <person name="Sebaihia M."/>
            <person name="Preston A."/>
            <person name="Murphy L.D."/>
            <person name="Thomson N.R."/>
            <person name="Harris D.E."/>
            <person name="Holden M.T.G."/>
            <person name="Churcher C.M."/>
            <person name="Bentley S.D."/>
            <person name="Mungall K.L."/>
            <person name="Cerdeno-Tarraga A.-M."/>
            <person name="Temple L."/>
            <person name="James K.D."/>
            <person name="Harris B."/>
            <person name="Quail M.A."/>
            <person name="Achtman M."/>
            <person name="Atkin R."/>
            <person name="Baker S."/>
            <person name="Basham D."/>
            <person name="Bason N."/>
            <person name="Cherevach I."/>
            <person name="Chillingworth T."/>
            <person name="Collins M."/>
            <person name="Cronin A."/>
            <person name="Davis P."/>
            <person name="Doggett J."/>
            <person name="Feltwell T."/>
            <person name="Goble A."/>
            <person name="Hamlin N."/>
            <person name="Hauser H."/>
            <person name="Holroyd S."/>
            <person name="Jagels K."/>
            <person name="Leather S."/>
            <person name="Moule S."/>
            <person name="Norberczak H."/>
            <person name="O'Neil S."/>
            <person name="Ormond D."/>
            <person name="Price C."/>
            <person name="Rabbinowitsch E."/>
            <person name="Rutter S."/>
            <person name="Sanders M."/>
            <person name="Saunders D."/>
            <person name="Seeger K."/>
            <person name="Sharp S."/>
            <person name="Simmonds M."/>
            <person name="Skelton J."/>
            <person name="Squares R."/>
            <person name="Squares S."/>
            <person name="Stevens K."/>
            <person name="Unwin L."/>
            <person name="Whitehead S."/>
            <person name="Barrell B.G."/>
            <person name="Maskell D.J."/>
        </authorList>
    </citation>
    <scope>NUCLEOTIDE SEQUENCE [LARGE SCALE GENOMIC DNA]</scope>
    <source>
        <strain>ATCC BAA-588 / NCTC 13252 / RB50</strain>
    </source>
</reference>
<reference key="2">
    <citation type="journal article" date="2016" name="ACS Chem. Biol.">
        <title>Functional Identification of Putrescine C- and N-Hydroxylases.</title>
        <authorList>
            <person name="Li B."/>
            <person name="Lowe-Power T."/>
            <person name="Kurihara S."/>
            <person name="Gonzales S."/>
            <person name="Naidoo J."/>
            <person name="MacMillan J.B."/>
            <person name="Allen C."/>
            <person name="Michael A.J."/>
        </authorList>
    </citation>
    <scope>FUNCTION AS A PUTRESCINE 2-HYDROXYLASE</scope>
</reference>
<dbReference type="EC" id="1.14.-.-" evidence="5"/>
<dbReference type="EMBL" id="BX640442">
    <property type="protein sequence ID" value="CAE32403.1"/>
    <property type="molecule type" value="Genomic_DNA"/>
</dbReference>
<dbReference type="SMR" id="A0A0H3LKV3"/>
<dbReference type="KEGG" id="bbr:BB1906"/>
<dbReference type="eggNOG" id="COG4638">
    <property type="taxonomic scope" value="Bacteria"/>
</dbReference>
<dbReference type="HOGENOM" id="CLU_026244_3_0_4"/>
<dbReference type="BioCyc" id="MetaCyc:MONOMER-20249"/>
<dbReference type="Proteomes" id="UP000001027">
    <property type="component" value="Chromosome"/>
</dbReference>
<dbReference type="GO" id="GO:0051537">
    <property type="term" value="F:2 iron, 2 sulfur cluster binding"/>
    <property type="evidence" value="ECO:0007669"/>
    <property type="project" value="UniProtKB-KW"/>
</dbReference>
<dbReference type="GO" id="GO:0005506">
    <property type="term" value="F:iron ion binding"/>
    <property type="evidence" value="ECO:0007669"/>
    <property type="project" value="InterPro"/>
</dbReference>
<dbReference type="GO" id="GO:0004497">
    <property type="term" value="F:monooxygenase activity"/>
    <property type="evidence" value="ECO:0007669"/>
    <property type="project" value="UniProtKB-KW"/>
</dbReference>
<dbReference type="CDD" id="cd00680">
    <property type="entry name" value="RHO_alpha_C"/>
    <property type="match status" value="1"/>
</dbReference>
<dbReference type="CDD" id="cd03469">
    <property type="entry name" value="Rieske_RO_Alpha_N"/>
    <property type="match status" value="1"/>
</dbReference>
<dbReference type="Gene3D" id="3.90.380.10">
    <property type="entry name" value="Naphthalene 1,2-dioxygenase Alpha Subunit, Chain A, domain 1"/>
    <property type="match status" value="1"/>
</dbReference>
<dbReference type="Gene3D" id="2.102.10.10">
    <property type="entry name" value="Rieske [2Fe-2S] iron-sulphur domain"/>
    <property type="match status" value="1"/>
</dbReference>
<dbReference type="InterPro" id="IPR017941">
    <property type="entry name" value="Rieske_2Fe-2S"/>
</dbReference>
<dbReference type="InterPro" id="IPR036922">
    <property type="entry name" value="Rieske_2Fe-2S_sf"/>
</dbReference>
<dbReference type="InterPro" id="IPR015879">
    <property type="entry name" value="Ring_hydroxy_dOase_asu_C_dom"/>
</dbReference>
<dbReference type="InterPro" id="IPR001663">
    <property type="entry name" value="Rng_hydr_dOase-A"/>
</dbReference>
<dbReference type="PANTHER" id="PTHR43756">
    <property type="entry name" value="CHOLINE MONOOXYGENASE, CHLOROPLASTIC"/>
    <property type="match status" value="1"/>
</dbReference>
<dbReference type="PANTHER" id="PTHR43756:SF5">
    <property type="entry name" value="CHOLINE MONOOXYGENASE, CHLOROPLASTIC"/>
    <property type="match status" value="1"/>
</dbReference>
<dbReference type="Pfam" id="PF00355">
    <property type="entry name" value="Rieske"/>
    <property type="match status" value="1"/>
</dbReference>
<dbReference type="Pfam" id="PF00848">
    <property type="entry name" value="Ring_hydroxyl_A"/>
    <property type="match status" value="1"/>
</dbReference>
<dbReference type="SUPFAM" id="SSF55961">
    <property type="entry name" value="Bet v1-like"/>
    <property type="match status" value="1"/>
</dbReference>
<dbReference type="SUPFAM" id="SSF50022">
    <property type="entry name" value="ISP domain"/>
    <property type="match status" value="1"/>
</dbReference>
<dbReference type="PROSITE" id="PS51296">
    <property type="entry name" value="RIESKE"/>
    <property type="match status" value="1"/>
</dbReference>
<accession>A0A0H3LKV3</accession>